<gene>
    <name evidence="1" type="primary">pcm</name>
    <name type="ordered locus">BWG_2479</name>
</gene>
<evidence type="ECO:0000255" key="1">
    <source>
        <dbReference type="HAMAP-Rule" id="MF_00090"/>
    </source>
</evidence>
<organism>
    <name type="scientific">Escherichia coli (strain K12 / MC4100 / BW2952)</name>
    <dbReference type="NCBI Taxonomy" id="595496"/>
    <lineage>
        <taxon>Bacteria</taxon>
        <taxon>Pseudomonadati</taxon>
        <taxon>Pseudomonadota</taxon>
        <taxon>Gammaproteobacteria</taxon>
        <taxon>Enterobacterales</taxon>
        <taxon>Enterobacteriaceae</taxon>
        <taxon>Escherichia</taxon>
    </lineage>
</organism>
<proteinExistence type="inferred from homology"/>
<comment type="function">
    <text evidence="1">Catalyzes the methyl esterification of L-isoaspartyl residues in peptides and proteins that result from spontaneous decomposition of normal L-aspartyl and L-asparaginyl residues. It plays a role in the repair and/or degradation of damaged proteins.</text>
</comment>
<comment type="catalytic activity">
    <reaction evidence="1">
        <text>[protein]-L-isoaspartate + S-adenosyl-L-methionine = [protein]-L-isoaspartate alpha-methyl ester + S-adenosyl-L-homocysteine</text>
        <dbReference type="Rhea" id="RHEA:12705"/>
        <dbReference type="Rhea" id="RHEA-COMP:12143"/>
        <dbReference type="Rhea" id="RHEA-COMP:12144"/>
        <dbReference type="ChEBI" id="CHEBI:57856"/>
        <dbReference type="ChEBI" id="CHEBI:59789"/>
        <dbReference type="ChEBI" id="CHEBI:90596"/>
        <dbReference type="ChEBI" id="CHEBI:90598"/>
        <dbReference type="EC" id="2.1.1.77"/>
    </reaction>
</comment>
<comment type="subcellular location">
    <subcellularLocation>
        <location evidence="1">Cytoplasm</location>
    </subcellularLocation>
</comment>
<comment type="similarity">
    <text evidence="1">Belongs to the methyltransferase superfamily. L-isoaspartyl/D-aspartyl protein methyltransferase family.</text>
</comment>
<name>PIMT_ECOBW</name>
<feature type="chain" id="PRO_1000202662" description="Protein-L-isoaspartate O-methyltransferase">
    <location>
        <begin position="1"/>
        <end position="208"/>
    </location>
</feature>
<feature type="active site" evidence="1">
    <location>
        <position position="59"/>
    </location>
</feature>
<accession>C4ZZP7</accession>
<protein>
    <recommendedName>
        <fullName evidence="1">Protein-L-isoaspartate O-methyltransferase</fullName>
        <ecNumber evidence="1">2.1.1.77</ecNumber>
    </recommendedName>
    <alternativeName>
        <fullName evidence="1">L-isoaspartyl protein carboxyl methyltransferase</fullName>
    </alternativeName>
    <alternativeName>
        <fullName evidence="1">Protein L-isoaspartyl methyltransferase</fullName>
    </alternativeName>
    <alternativeName>
        <fullName evidence="1">Protein-beta-aspartate methyltransferase</fullName>
        <shortName evidence="1">PIMT</shortName>
    </alternativeName>
</protein>
<sequence>MVSRRVQALLDQLRAQGIQDEQVLNALAAVPREKFVDEAFEQKAWDNIALPIGQGQTISQPYMVARMTELLELTPQSRVLEIGTGSGYQTAILAHLVQHVCSVERIKGLQWQARRRLKNLDLHNVSTRHGDGWQGWQARAPFDAIIVTAAPPEIPTALMTQLDEGGILVLPVGEEHQYLKRVRRRGGEFIIDTVEAVRFVPLVKGELA</sequence>
<dbReference type="EC" id="2.1.1.77" evidence="1"/>
<dbReference type="EMBL" id="CP001396">
    <property type="protein sequence ID" value="ACR63669.1"/>
    <property type="molecule type" value="Genomic_DNA"/>
</dbReference>
<dbReference type="RefSeq" id="WP_000254708.1">
    <property type="nucleotide sequence ID" value="NC_012759.1"/>
</dbReference>
<dbReference type="SMR" id="C4ZZP7"/>
<dbReference type="GeneID" id="93779263"/>
<dbReference type="KEGG" id="ebw:BWG_2479"/>
<dbReference type="HOGENOM" id="CLU_055432_2_0_6"/>
<dbReference type="GO" id="GO:0005737">
    <property type="term" value="C:cytoplasm"/>
    <property type="evidence" value="ECO:0007669"/>
    <property type="project" value="UniProtKB-SubCell"/>
</dbReference>
<dbReference type="GO" id="GO:0004719">
    <property type="term" value="F:protein-L-isoaspartate (D-aspartate) O-methyltransferase activity"/>
    <property type="evidence" value="ECO:0007669"/>
    <property type="project" value="UniProtKB-UniRule"/>
</dbReference>
<dbReference type="GO" id="GO:0032259">
    <property type="term" value="P:methylation"/>
    <property type="evidence" value="ECO:0007669"/>
    <property type="project" value="UniProtKB-KW"/>
</dbReference>
<dbReference type="GO" id="GO:0036211">
    <property type="term" value="P:protein modification process"/>
    <property type="evidence" value="ECO:0007669"/>
    <property type="project" value="UniProtKB-UniRule"/>
</dbReference>
<dbReference type="GO" id="GO:0030091">
    <property type="term" value="P:protein repair"/>
    <property type="evidence" value="ECO:0007669"/>
    <property type="project" value="UniProtKB-UniRule"/>
</dbReference>
<dbReference type="CDD" id="cd02440">
    <property type="entry name" value="AdoMet_MTases"/>
    <property type="match status" value="1"/>
</dbReference>
<dbReference type="FunFam" id="3.40.50.150:FF:000010">
    <property type="entry name" value="Protein-L-isoaspartate O-methyltransferase"/>
    <property type="match status" value="1"/>
</dbReference>
<dbReference type="Gene3D" id="3.40.50.150">
    <property type="entry name" value="Vaccinia Virus protein VP39"/>
    <property type="match status" value="1"/>
</dbReference>
<dbReference type="HAMAP" id="MF_00090">
    <property type="entry name" value="PIMT"/>
    <property type="match status" value="1"/>
</dbReference>
<dbReference type="InterPro" id="IPR000682">
    <property type="entry name" value="PCMT"/>
</dbReference>
<dbReference type="InterPro" id="IPR029063">
    <property type="entry name" value="SAM-dependent_MTases_sf"/>
</dbReference>
<dbReference type="NCBIfam" id="TIGR00080">
    <property type="entry name" value="pimt"/>
    <property type="match status" value="1"/>
</dbReference>
<dbReference type="NCBIfam" id="NF001453">
    <property type="entry name" value="PRK00312.1"/>
    <property type="match status" value="1"/>
</dbReference>
<dbReference type="PANTHER" id="PTHR11579">
    <property type="entry name" value="PROTEIN-L-ISOASPARTATE O-METHYLTRANSFERASE"/>
    <property type="match status" value="1"/>
</dbReference>
<dbReference type="PANTHER" id="PTHR11579:SF0">
    <property type="entry name" value="PROTEIN-L-ISOASPARTATE(D-ASPARTATE) O-METHYLTRANSFERASE"/>
    <property type="match status" value="1"/>
</dbReference>
<dbReference type="Pfam" id="PF01135">
    <property type="entry name" value="PCMT"/>
    <property type="match status" value="1"/>
</dbReference>
<dbReference type="SUPFAM" id="SSF53335">
    <property type="entry name" value="S-adenosyl-L-methionine-dependent methyltransferases"/>
    <property type="match status" value="1"/>
</dbReference>
<dbReference type="PROSITE" id="PS01279">
    <property type="entry name" value="PCMT"/>
    <property type="match status" value="1"/>
</dbReference>
<keyword id="KW-0963">Cytoplasm</keyword>
<keyword id="KW-0489">Methyltransferase</keyword>
<keyword id="KW-0949">S-adenosyl-L-methionine</keyword>
<keyword id="KW-0808">Transferase</keyword>
<reference key="1">
    <citation type="journal article" date="2009" name="J. Bacteriol.">
        <title>Genomic sequencing reveals regulatory mutations and recombinational events in the widely used MC4100 lineage of Escherichia coli K-12.</title>
        <authorList>
            <person name="Ferenci T."/>
            <person name="Zhou Z."/>
            <person name="Betteridge T."/>
            <person name="Ren Y."/>
            <person name="Liu Y."/>
            <person name="Feng L."/>
            <person name="Reeves P.R."/>
            <person name="Wang L."/>
        </authorList>
    </citation>
    <scope>NUCLEOTIDE SEQUENCE [LARGE SCALE GENOMIC DNA]</scope>
    <source>
        <strain>K12 / MC4100 / BW2952</strain>
    </source>
</reference>